<feature type="signal peptide" evidence="1">
    <location>
        <begin position="1"/>
        <end position="30"/>
    </location>
</feature>
<feature type="chain" id="PRO_0000032913" description="Prolactin">
    <location>
        <begin position="31"/>
        <end position="229"/>
    </location>
</feature>
<feature type="modified residue" description="Phosphoserine" evidence="3">
    <location>
        <position position="56"/>
    </location>
</feature>
<feature type="modified residue" description="Phosphoserine" evidence="3">
    <location>
        <position position="64"/>
    </location>
</feature>
<feature type="modified residue" description="Phosphoserine" evidence="3">
    <location>
        <position position="120"/>
    </location>
</feature>
<feature type="disulfide bond" evidence="1">
    <location>
        <begin position="34"/>
        <end position="41"/>
    </location>
</feature>
<feature type="disulfide bond" evidence="1">
    <location>
        <begin position="88"/>
        <end position="204"/>
    </location>
</feature>
<feature type="disulfide bond" evidence="1">
    <location>
        <begin position="221"/>
        <end position="229"/>
    </location>
</feature>
<dbReference type="EMBL" id="AY373035">
    <property type="protein sequence ID" value="AAQ76549.1"/>
    <property type="molecule type" value="mRNA"/>
</dbReference>
<dbReference type="SMR" id="Q6UC74"/>
<dbReference type="GO" id="GO:0005615">
    <property type="term" value="C:extracellular space"/>
    <property type="evidence" value="ECO:0007669"/>
    <property type="project" value="TreeGrafter"/>
</dbReference>
<dbReference type="GO" id="GO:0005179">
    <property type="term" value="F:hormone activity"/>
    <property type="evidence" value="ECO:0007669"/>
    <property type="project" value="UniProtKB-KW"/>
</dbReference>
<dbReference type="GO" id="GO:0005148">
    <property type="term" value="F:prolactin receptor binding"/>
    <property type="evidence" value="ECO:0000250"/>
    <property type="project" value="AgBase"/>
</dbReference>
<dbReference type="GO" id="GO:0007565">
    <property type="term" value="P:female pregnancy"/>
    <property type="evidence" value="ECO:0007669"/>
    <property type="project" value="TreeGrafter"/>
</dbReference>
<dbReference type="GO" id="GO:0007595">
    <property type="term" value="P:lactation"/>
    <property type="evidence" value="ECO:0007669"/>
    <property type="project" value="UniProtKB-KW"/>
</dbReference>
<dbReference type="GO" id="GO:0043066">
    <property type="term" value="P:negative regulation of apoptotic process"/>
    <property type="evidence" value="ECO:0000250"/>
    <property type="project" value="AgBase"/>
</dbReference>
<dbReference type="GO" id="GO:0030072">
    <property type="term" value="P:peptide hormone secretion"/>
    <property type="evidence" value="ECO:0000250"/>
    <property type="project" value="AgBase"/>
</dbReference>
<dbReference type="GO" id="GO:0008284">
    <property type="term" value="P:positive regulation of cell population proliferation"/>
    <property type="evidence" value="ECO:0007669"/>
    <property type="project" value="TreeGrafter"/>
</dbReference>
<dbReference type="GO" id="GO:0045723">
    <property type="term" value="P:positive regulation of fatty acid biosynthetic process"/>
    <property type="evidence" value="ECO:0000250"/>
    <property type="project" value="AgBase"/>
</dbReference>
<dbReference type="GO" id="GO:0010628">
    <property type="term" value="P:positive regulation of gene expression"/>
    <property type="evidence" value="ECO:0000250"/>
    <property type="project" value="AgBase"/>
</dbReference>
<dbReference type="GO" id="GO:1903489">
    <property type="term" value="P:positive regulation of lactation"/>
    <property type="evidence" value="ECO:0007669"/>
    <property type="project" value="TreeGrafter"/>
</dbReference>
<dbReference type="GO" id="GO:0046427">
    <property type="term" value="P:positive regulation of receptor signaling pathway via JAK-STAT"/>
    <property type="evidence" value="ECO:0007669"/>
    <property type="project" value="TreeGrafter"/>
</dbReference>
<dbReference type="GO" id="GO:0031667">
    <property type="term" value="P:response to nutrient levels"/>
    <property type="evidence" value="ECO:0007669"/>
    <property type="project" value="TreeGrafter"/>
</dbReference>
<dbReference type="CDD" id="cd10288">
    <property type="entry name" value="prolactin_like"/>
    <property type="match status" value="1"/>
</dbReference>
<dbReference type="FunFam" id="1.20.1250.10:FF:000003">
    <property type="entry name" value="Prolactin"/>
    <property type="match status" value="1"/>
</dbReference>
<dbReference type="Gene3D" id="1.20.1250.10">
    <property type="match status" value="1"/>
</dbReference>
<dbReference type="InterPro" id="IPR009079">
    <property type="entry name" value="4_helix_cytokine-like_core"/>
</dbReference>
<dbReference type="InterPro" id="IPR001400">
    <property type="entry name" value="Somatotropin/Prolactin"/>
</dbReference>
<dbReference type="InterPro" id="IPR018116">
    <property type="entry name" value="Somatotropin_CS"/>
</dbReference>
<dbReference type="PANTHER" id="PTHR11417:SF5">
    <property type="entry name" value="PROLACTIN"/>
    <property type="match status" value="1"/>
</dbReference>
<dbReference type="PANTHER" id="PTHR11417">
    <property type="entry name" value="SOMATOTROPIN,PROLACTIN"/>
    <property type="match status" value="1"/>
</dbReference>
<dbReference type="Pfam" id="PF00103">
    <property type="entry name" value="Hormone_1"/>
    <property type="match status" value="1"/>
</dbReference>
<dbReference type="PRINTS" id="PR00836">
    <property type="entry name" value="SOMATOTROPIN"/>
</dbReference>
<dbReference type="SUPFAM" id="SSF47266">
    <property type="entry name" value="4-helical cytokines"/>
    <property type="match status" value="1"/>
</dbReference>
<dbReference type="PROSITE" id="PS00266">
    <property type="entry name" value="SOMATOTROPIN_1"/>
    <property type="match status" value="1"/>
</dbReference>
<dbReference type="PROSITE" id="PS00338">
    <property type="entry name" value="SOMATOTROPIN_2"/>
    <property type="match status" value="1"/>
</dbReference>
<accession>Q6UC74</accession>
<gene>
    <name type="primary">PRL</name>
</gene>
<sequence length="229" mass="25794">MDSKVSSQKGSRLLLLLVVSNLLLCQGVVSTPVCPNGAGNCQVSLRDLFDRAVMVSHYIHNLSSEMFNEFDKRYAQGKGFITMALNSCHTSSLPTPEDKEQAQQTHHEVLMSLILGLLRSWNDPLYHLVTEVRGMKGAPDGILSRAIEIEEENKRLLEGMEMIFGQVLPGAKETEPYPVWSGLPSLQTKDEDARYSAFYNLLHCLRRDSSKIDTYLKLLNCRIIYNNNC</sequence>
<comment type="function">
    <text>Prolactin acts primarily on the mammary gland by promoting lactation.</text>
</comment>
<comment type="subunit">
    <text evidence="2">Interacts with PRLR.</text>
</comment>
<comment type="subcellular location">
    <subcellularLocation>
        <location>Secreted</location>
    </subcellularLocation>
</comment>
<comment type="similarity">
    <text evidence="4">Belongs to the somatotropin/prolactin family.</text>
</comment>
<proteinExistence type="evidence at transcript level"/>
<organism>
    <name type="scientific">Cervus elaphus</name>
    <name type="common">Red deer</name>
    <dbReference type="NCBI Taxonomy" id="9860"/>
    <lineage>
        <taxon>Eukaryota</taxon>
        <taxon>Metazoa</taxon>
        <taxon>Chordata</taxon>
        <taxon>Craniata</taxon>
        <taxon>Vertebrata</taxon>
        <taxon>Euteleostomi</taxon>
        <taxon>Mammalia</taxon>
        <taxon>Eutheria</taxon>
        <taxon>Laurasiatheria</taxon>
        <taxon>Artiodactyla</taxon>
        <taxon>Ruminantia</taxon>
        <taxon>Pecora</taxon>
        <taxon>Cervidae</taxon>
        <taxon>Cervinae</taxon>
        <taxon>Cervus</taxon>
    </lineage>
</organism>
<evidence type="ECO:0000250" key="1"/>
<evidence type="ECO:0000250" key="2">
    <source>
        <dbReference type="UniProtKB" id="P01236"/>
    </source>
</evidence>
<evidence type="ECO:0000250" key="3">
    <source>
        <dbReference type="UniProtKB" id="P01239"/>
    </source>
</evidence>
<evidence type="ECO:0000305" key="4"/>
<name>PRL_CEREL</name>
<reference key="1">
    <citation type="journal article" date="2003" name="Domest. Anim. Endocrinol.">
        <title>Cloning and nucleotide sequence of the equine and elk pituitary pre-prolactin cDNA.</title>
        <authorList>
            <person name="Clark R.J."/>
            <person name="Valderrama X.P."/>
            <person name="Furlan M.A."/>
            <person name="Chedrese P.J."/>
        </authorList>
    </citation>
    <scope>NUCLEOTIDE SEQUENCE [MRNA]</scope>
    <source>
        <tissue>Pituitary</tissue>
    </source>
</reference>
<protein>
    <recommendedName>
        <fullName>Prolactin</fullName>
        <shortName>PRL</shortName>
    </recommendedName>
</protein>
<keyword id="KW-1015">Disulfide bond</keyword>
<keyword id="KW-0372">Hormone</keyword>
<keyword id="KW-0421">Lactation</keyword>
<keyword id="KW-0597">Phosphoprotein</keyword>
<keyword id="KW-0964">Secreted</keyword>
<keyword id="KW-0732">Signal</keyword>